<proteinExistence type="inferred from homology"/>
<accession>B7ISY7</accession>
<gene>
    <name evidence="1" type="primary">lysS</name>
    <name type="ordered locus">BCG9842_B5232</name>
</gene>
<reference key="1">
    <citation type="submission" date="2008-10" db="EMBL/GenBank/DDBJ databases">
        <title>Genome sequence of Bacillus cereus G9842.</title>
        <authorList>
            <person name="Dodson R.J."/>
            <person name="Durkin A.S."/>
            <person name="Rosovitz M.J."/>
            <person name="Rasko D.A."/>
            <person name="Hoffmaster A."/>
            <person name="Ravel J."/>
            <person name="Sutton G."/>
        </authorList>
    </citation>
    <scope>NUCLEOTIDE SEQUENCE [LARGE SCALE GENOMIC DNA]</scope>
    <source>
        <strain>G9842</strain>
    </source>
</reference>
<dbReference type="EC" id="6.1.1.6" evidence="1"/>
<dbReference type="EMBL" id="CP001186">
    <property type="protein sequence ID" value="ACK94066.1"/>
    <property type="molecule type" value="Genomic_DNA"/>
</dbReference>
<dbReference type="RefSeq" id="WP_000369685.1">
    <property type="nucleotide sequence ID" value="NC_011772.1"/>
</dbReference>
<dbReference type="SMR" id="B7ISY7"/>
<dbReference type="GeneID" id="64181498"/>
<dbReference type="KEGG" id="bcg:BCG9842_B5232"/>
<dbReference type="HOGENOM" id="CLU_008255_6_0_9"/>
<dbReference type="Proteomes" id="UP000006744">
    <property type="component" value="Chromosome"/>
</dbReference>
<dbReference type="GO" id="GO:0005829">
    <property type="term" value="C:cytosol"/>
    <property type="evidence" value="ECO:0007669"/>
    <property type="project" value="TreeGrafter"/>
</dbReference>
<dbReference type="GO" id="GO:0005524">
    <property type="term" value="F:ATP binding"/>
    <property type="evidence" value="ECO:0007669"/>
    <property type="project" value="UniProtKB-UniRule"/>
</dbReference>
<dbReference type="GO" id="GO:0140096">
    <property type="term" value="F:catalytic activity, acting on a protein"/>
    <property type="evidence" value="ECO:0007669"/>
    <property type="project" value="UniProtKB-ARBA"/>
</dbReference>
<dbReference type="GO" id="GO:0004824">
    <property type="term" value="F:lysine-tRNA ligase activity"/>
    <property type="evidence" value="ECO:0007669"/>
    <property type="project" value="UniProtKB-UniRule"/>
</dbReference>
<dbReference type="GO" id="GO:0000287">
    <property type="term" value="F:magnesium ion binding"/>
    <property type="evidence" value="ECO:0007669"/>
    <property type="project" value="UniProtKB-UniRule"/>
</dbReference>
<dbReference type="GO" id="GO:0016740">
    <property type="term" value="F:transferase activity"/>
    <property type="evidence" value="ECO:0007669"/>
    <property type="project" value="UniProtKB-ARBA"/>
</dbReference>
<dbReference type="GO" id="GO:0000049">
    <property type="term" value="F:tRNA binding"/>
    <property type="evidence" value="ECO:0007669"/>
    <property type="project" value="TreeGrafter"/>
</dbReference>
<dbReference type="GO" id="GO:0006430">
    <property type="term" value="P:lysyl-tRNA aminoacylation"/>
    <property type="evidence" value="ECO:0007669"/>
    <property type="project" value="UniProtKB-UniRule"/>
</dbReference>
<dbReference type="CDD" id="cd00775">
    <property type="entry name" value="LysRS_core"/>
    <property type="match status" value="1"/>
</dbReference>
<dbReference type="CDD" id="cd04322">
    <property type="entry name" value="LysRS_N"/>
    <property type="match status" value="1"/>
</dbReference>
<dbReference type="FunFam" id="2.40.50.140:FF:000024">
    <property type="entry name" value="Lysine--tRNA ligase"/>
    <property type="match status" value="1"/>
</dbReference>
<dbReference type="FunFam" id="3.30.930.10:FF:000001">
    <property type="entry name" value="Lysine--tRNA ligase"/>
    <property type="match status" value="1"/>
</dbReference>
<dbReference type="Gene3D" id="3.30.930.10">
    <property type="entry name" value="Bira Bifunctional Protein, Domain 2"/>
    <property type="match status" value="1"/>
</dbReference>
<dbReference type="Gene3D" id="2.40.50.140">
    <property type="entry name" value="Nucleic acid-binding proteins"/>
    <property type="match status" value="1"/>
</dbReference>
<dbReference type="HAMAP" id="MF_00252">
    <property type="entry name" value="Lys_tRNA_synth_class2"/>
    <property type="match status" value="1"/>
</dbReference>
<dbReference type="InterPro" id="IPR004364">
    <property type="entry name" value="Aa-tRNA-synt_II"/>
</dbReference>
<dbReference type="InterPro" id="IPR006195">
    <property type="entry name" value="aa-tRNA-synth_II"/>
</dbReference>
<dbReference type="InterPro" id="IPR045864">
    <property type="entry name" value="aa-tRNA-synth_II/BPL/LPL"/>
</dbReference>
<dbReference type="InterPro" id="IPR002313">
    <property type="entry name" value="Lys-tRNA-ligase_II"/>
</dbReference>
<dbReference type="InterPro" id="IPR034762">
    <property type="entry name" value="Lys-tRNA-ligase_II_bac/euk"/>
</dbReference>
<dbReference type="InterPro" id="IPR044136">
    <property type="entry name" value="Lys-tRNA-ligase_II_N"/>
</dbReference>
<dbReference type="InterPro" id="IPR018149">
    <property type="entry name" value="Lys-tRNA-synth_II_C"/>
</dbReference>
<dbReference type="InterPro" id="IPR012340">
    <property type="entry name" value="NA-bd_OB-fold"/>
</dbReference>
<dbReference type="InterPro" id="IPR004365">
    <property type="entry name" value="NA-bd_OB_tRNA"/>
</dbReference>
<dbReference type="NCBIfam" id="TIGR00499">
    <property type="entry name" value="lysS_bact"/>
    <property type="match status" value="1"/>
</dbReference>
<dbReference type="NCBIfam" id="NF001756">
    <property type="entry name" value="PRK00484.1"/>
    <property type="match status" value="1"/>
</dbReference>
<dbReference type="PANTHER" id="PTHR42918:SF15">
    <property type="entry name" value="LYSINE--TRNA LIGASE, CHLOROPLASTIC_MITOCHONDRIAL"/>
    <property type="match status" value="1"/>
</dbReference>
<dbReference type="PANTHER" id="PTHR42918">
    <property type="entry name" value="LYSYL-TRNA SYNTHETASE"/>
    <property type="match status" value="1"/>
</dbReference>
<dbReference type="Pfam" id="PF00152">
    <property type="entry name" value="tRNA-synt_2"/>
    <property type="match status" value="1"/>
</dbReference>
<dbReference type="Pfam" id="PF01336">
    <property type="entry name" value="tRNA_anti-codon"/>
    <property type="match status" value="1"/>
</dbReference>
<dbReference type="PIRSF" id="PIRSF039101">
    <property type="entry name" value="LysRS2"/>
    <property type="match status" value="1"/>
</dbReference>
<dbReference type="PRINTS" id="PR00982">
    <property type="entry name" value="TRNASYNTHLYS"/>
</dbReference>
<dbReference type="SUPFAM" id="SSF55681">
    <property type="entry name" value="Class II aaRS and biotin synthetases"/>
    <property type="match status" value="1"/>
</dbReference>
<dbReference type="SUPFAM" id="SSF50249">
    <property type="entry name" value="Nucleic acid-binding proteins"/>
    <property type="match status" value="1"/>
</dbReference>
<dbReference type="PROSITE" id="PS50862">
    <property type="entry name" value="AA_TRNA_LIGASE_II"/>
    <property type="match status" value="1"/>
</dbReference>
<evidence type="ECO:0000255" key="1">
    <source>
        <dbReference type="HAMAP-Rule" id="MF_00252"/>
    </source>
</evidence>
<sequence>MDNMNHEELNDQLLVRREKLHNLREQGIDPFGKRFERTNSTTDLVSLYGEFSKEELEEKEITVSIAGRIMTKRGKGKAGFAHIQDLHGQVQIYVRKDTVGDEEYELFTTADLGDLVGIEGKVFKTNVGELSVKATGFTLLTKSLRPLPDKYHGLKDVEQRYRQRYLDLITSMESRETFVTRSKIIREMRRYLDDNGYLEVETPMMHAIAGGASARPFTTHHNALDMELYMRIAIELHLKRLIVGGLEKVYEIGRVFRNEGVSTRHNPEFTMIELYEAYADYNDIMKLTENMVAHIAKKVLGTTTIQYGDYEINLEPEWTRLHMVDAIKQHSGADFWNPMSVEEARELAKEHNVEIKDTMEVGHIINEFFEQKVEDKLIQPTFIYGHPVEISPLAKKNDEDPRFTDRFELFIVAREHANAFTELNDPIDQKERFEAQLKEREQGNDEAHMMDDDYIEALEYGMPPTGGLGIGIDRLVMLLTNAPSIRDVLLFPAMRHKQD</sequence>
<name>SYK_BACC2</name>
<organism>
    <name type="scientific">Bacillus cereus (strain G9842)</name>
    <dbReference type="NCBI Taxonomy" id="405531"/>
    <lineage>
        <taxon>Bacteria</taxon>
        <taxon>Bacillati</taxon>
        <taxon>Bacillota</taxon>
        <taxon>Bacilli</taxon>
        <taxon>Bacillales</taxon>
        <taxon>Bacillaceae</taxon>
        <taxon>Bacillus</taxon>
        <taxon>Bacillus cereus group</taxon>
    </lineage>
</organism>
<feature type="chain" id="PRO_1000199241" description="Lysine--tRNA ligase">
    <location>
        <begin position="1"/>
        <end position="499"/>
    </location>
</feature>
<feature type="binding site" evidence="1">
    <location>
        <position position="408"/>
    </location>
    <ligand>
        <name>Mg(2+)</name>
        <dbReference type="ChEBI" id="CHEBI:18420"/>
        <label>1</label>
    </ligand>
</feature>
<feature type="binding site" evidence="1">
    <location>
        <position position="415"/>
    </location>
    <ligand>
        <name>Mg(2+)</name>
        <dbReference type="ChEBI" id="CHEBI:18420"/>
        <label>1</label>
    </ligand>
</feature>
<feature type="binding site" evidence="1">
    <location>
        <position position="415"/>
    </location>
    <ligand>
        <name>Mg(2+)</name>
        <dbReference type="ChEBI" id="CHEBI:18420"/>
        <label>2</label>
    </ligand>
</feature>
<keyword id="KW-0030">Aminoacyl-tRNA synthetase</keyword>
<keyword id="KW-0067">ATP-binding</keyword>
<keyword id="KW-0963">Cytoplasm</keyword>
<keyword id="KW-0436">Ligase</keyword>
<keyword id="KW-0460">Magnesium</keyword>
<keyword id="KW-0479">Metal-binding</keyword>
<keyword id="KW-0547">Nucleotide-binding</keyword>
<keyword id="KW-0648">Protein biosynthesis</keyword>
<comment type="catalytic activity">
    <reaction evidence="1">
        <text>tRNA(Lys) + L-lysine + ATP = L-lysyl-tRNA(Lys) + AMP + diphosphate</text>
        <dbReference type="Rhea" id="RHEA:20792"/>
        <dbReference type="Rhea" id="RHEA-COMP:9696"/>
        <dbReference type="Rhea" id="RHEA-COMP:9697"/>
        <dbReference type="ChEBI" id="CHEBI:30616"/>
        <dbReference type="ChEBI" id="CHEBI:32551"/>
        <dbReference type="ChEBI" id="CHEBI:33019"/>
        <dbReference type="ChEBI" id="CHEBI:78442"/>
        <dbReference type="ChEBI" id="CHEBI:78529"/>
        <dbReference type="ChEBI" id="CHEBI:456215"/>
        <dbReference type="EC" id="6.1.1.6"/>
    </reaction>
</comment>
<comment type="cofactor">
    <cofactor evidence="1">
        <name>Mg(2+)</name>
        <dbReference type="ChEBI" id="CHEBI:18420"/>
    </cofactor>
    <text evidence="1">Binds 3 Mg(2+) ions per subunit.</text>
</comment>
<comment type="subunit">
    <text evidence="1">Homodimer.</text>
</comment>
<comment type="subcellular location">
    <subcellularLocation>
        <location evidence="1">Cytoplasm</location>
    </subcellularLocation>
</comment>
<comment type="similarity">
    <text evidence="1">Belongs to the class-II aminoacyl-tRNA synthetase family.</text>
</comment>
<protein>
    <recommendedName>
        <fullName evidence="1">Lysine--tRNA ligase</fullName>
        <ecNumber evidence="1">6.1.1.6</ecNumber>
    </recommendedName>
    <alternativeName>
        <fullName evidence="1">Lysyl-tRNA synthetase</fullName>
        <shortName evidence="1">LysRS</shortName>
    </alternativeName>
</protein>